<name>CYB_HEMLA</name>
<comment type="function">
    <text evidence="2">Component of the ubiquinol-cytochrome c reductase complex (complex III or cytochrome b-c1 complex) that is part of the mitochondrial respiratory chain. The b-c1 complex mediates electron transfer from ubiquinol to cytochrome c. Contributes to the generation of a proton gradient across the mitochondrial membrane that is then used for ATP synthesis.</text>
</comment>
<comment type="cofactor">
    <cofactor evidence="2">
        <name>heme b</name>
        <dbReference type="ChEBI" id="CHEBI:60344"/>
    </cofactor>
    <text evidence="2">Binds 2 heme b groups non-covalently.</text>
</comment>
<comment type="subunit">
    <text evidence="2">The cytochrome bc1 complex contains 3 respiratory subunits (MT-CYB, CYC1 and UQCRFS1), 2 core proteins (UQCRC1 and UQCRC2) and probably 6 low-molecular weight proteins.</text>
</comment>
<comment type="subcellular location">
    <subcellularLocation>
        <location evidence="2">Mitochondrion inner membrane</location>
        <topology evidence="2">Multi-pass membrane protein</topology>
    </subcellularLocation>
</comment>
<comment type="miscellaneous">
    <text evidence="1">Heme 1 (or BL or b562) is low-potential and absorbs at about 562 nm, and heme 2 (or BH or b566) is high-potential and absorbs at about 566 nm.</text>
</comment>
<comment type="similarity">
    <text evidence="3 4">Belongs to the cytochrome b family.</text>
</comment>
<comment type="caution">
    <text evidence="2">The full-length protein contains only eight transmembrane helices, not nine as predicted by bioinformatics tools.</text>
</comment>
<evidence type="ECO:0000250" key="1"/>
<evidence type="ECO:0000250" key="2">
    <source>
        <dbReference type="UniProtKB" id="P00157"/>
    </source>
</evidence>
<evidence type="ECO:0000255" key="3">
    <source>
        <dbReference type="PROSITE-ProRule" id="PRU00967"/>
    </source>
</evidence>
<evidence type="ECO:0000255" key="4">
    <source>
        <dbReference type="PROSITE-ProRule" id="PRU00968"/>
    </source>
</evidence>
<accession>Q9XKK5</accession>
<feature type="chain" id="PRO_0000060866" description="Cytochrome b">
    <location>
        <begin position="1"/>
        <end position="380"/>
    </location>
</feature>
<feature type="transmembrane region" description="Helical" evidence="2">
    <location>
        <begin position="34"/>
        <end position="54"/>
    </location>
</feature>
<feature type="transmembrane region" description="Helical" evidence="2">
    <location>
        <begin position="78"/>
        <end position="99"/>
    </location>
</feature>
<feature type="transmembrane region" description="Helical" evidence="2">
    <location>
        <begin position="114"/>
        <end position="134"/>
    </location>
</feature>
<feature type="transmembrane region" description="Helical" evidence="2">
    <location>
        <begin position="179"/>
        <end position="199"/>
    </location>
</feature>
<feature type="transmembrane region" description="Helical" evidence="2">
    <location>
        <begin position="227"/>
        <end position="247"/>
    </location>
</feature>
<feature type="transmembrane region" description="Helical" evidence="2">
    <location>
        <begin position="289"/>
        <end position="309"/>
    </location>
</feature>
<feature type="transmembrane region" description="Helical" evidence="2">
    <location>
        <begin position="321"/>
        <end position="341"/>
    </location>
</feature>
<feature type="transmembrane region" description="Helical" evidence="2">
    <location>
        <begin position="348"/>
        <end position="368"/>
    </location>
</feature>
<feature type="binding site" description="axial binding residue" evidence="2">
    <location>
        <position position="84"/>
    </location>
    <ligand>
        <name>heme b</name>
        <dbReference type="ChEBI" id="CHEBI:60344"/>
        <label>b562</label>
    </ligand>
    <ligandPart>
        <name>Fe</name>
        <dbReference type="ChEBI" id="CHEBI:18248"/>
    </ligandPart>
</feature>
<feature type="binding site" description="axial binding residue" evidence="2">
    <location>
        <position position="98"/>
    </location>
    <ligand>
        <name>heme b</name>
        <dbReference type="ChEBI" id="CHEBI:60344"/>
        <label>b566</label>
    </ligand>
    <ligandPart>
        <name>Fe</name>
        <dbReference type="ChEBI" id="CHEBI:18248"/>
    </ligandPart>
</feature>
<feature type="binding site" description="axial binding residue" evidence="2">
    <location>
        <position position="183"/>
    </location>
    <ligand>
        <name>heme b</name>
        <dbReference type="ChEBI" id="CHEBI:60344"/>
        <label>b562</label>
    </ligand>
    <ligandPart>
        <name>Fe</name>
        <dbReference type="ChEBI" id="CHEBI:18248"/>
    </ligandPart>
</feature>
<feature type="binding site" description="axial binding residue" evidence="2">
    <location>
        <position position="197"/>
    </location>
    <ligand>
        <name>heme b</name>
        <dbReference type="ChEBI" id="CHEBI:60344"/>
        <label>b566</label>
    </ligand>
    <ligandPart>
        <name>Fe</name>
        <dbReference type="ChEBI" id="CHEBI:18248"/>
    </ligandPart>
</feature>
<feature type="binding site" evidence="2">
    <location>
        <position position="202"/>
    </location>
    <ligand>
        <name>a ubiquinone</name>
        <dbReference type="ChEBI" id="CHEBI:16389"/>
    </ligand>
</feature>
<protein>
    <recommendedName>
        <fullName>Cytochrome b</fullName>
    </recommendedName>
    <alternativeName>
        <fullName>Complex III subunit 3</fullName>
    </alternativeName>
    <alternativeName>
        <fullName>Complex III subunit III</fullName>
    </alternativeName>
    <alternativeName>
        <fullName>Cytochrome b-c1 complex subunit 3</fullName>
    </alternativeName>
    <alternativeName>
        <fullName>Ubiquinol-cytochrome-c reductase complex cytochrome b subunit</fullName>
    </alternativeName>
</protein>
<gene>
    <name type="primary">mt-cyb</name>
    <name type="synonym">cob</name>
    <name type="synonym">cytb</name>
    <name type="synonym">mtcyb</name>
</gene>
<geneLocation type="mitochondrion"/>
<reference key="1">
    <citation type="journal article" date="1999" name="Fish. Sci.">
        <title>Molecular phylogeny of Asian freshwater and marine stingrays based on the DNA nucleotide and deduced amino acid sequences of the cytochrome b gene.</title>
        <authorList>
            <person name="Sezaki K."/>
            <person name="Begum R.A."/>
            <person name="Wongrat P."/>
            <person name="Srivastava M.P."/>
            <person name="SriKantha S."/>
            <person name="Kikuchi K."/>
            <person name="Ishihara H."/>
            <person name="Tanaka S."/>
            <person name="Taniuchi T."/>
            <person name="Watabe S."/>
        </authorList>
    </citation>
    <scope>NUCLEOTIDE SEQUENCE [GENOMIC DNA]</scope>
</reference>
<dbReference type="EMBL" id="AB021504">
    <property type="protein sequence ID" value="BAA78474.1"/>
    <property type="molecule type" value="Genomic_DNA"/>
</dbReference>
<dbReference type="SMR" id="Q9XKK5"/>
<dbReference type="GO" id="GO:0005743">
    <property type="term" value="C:mitochondrial inner membrane"/>
    <property type="evidence" value="ECO:0007669"/>
    <property type="project" value="UniProtKB-SubCell"/>
</dbReference>
<dbReference type="GO" id="GO:0045275">
    <property type="term" value="C:respiratory chain complex III"/>
    <property type="evidence" value="ECO:0007669"/>
    <property type="project" value="InterPro"/>
</dbReference>
<dbReference type="GO" id="GO:0046872">
    <property type="term" value="F:metal ion binding"/>
    <property type="evidence" value="ECO:0007669"/>
    <property type="project" value="UniProtKB-KW"/>
</dbReference>
<dbReference type="GO" id="GO:0008121">
    <property type="term" value="F:ubiquinol-cytochrome-c reductase activity"/>
    <property type="evidence" value="ECO:0007669"/>
    <property type="project" value="InterPro"/>
</dbReference>
<dbReference type="GO" id="GO:0006122">
    <property type="term" value="P:mitochondrial electron transport, ubiquinol to cytochrome c"/>
    <property type="evidence" value="ECO:0007669"/>
    <property type="project" value="TreeGrafter"/>
</dbReference>
<dbReference type="CDD" id="cd00290">
    <property type="entry name" value="cytochrome_b_C"/>
    <property type="match status" value="1"/>
</dbReference>
<dbReference type="CDD" id="cd00284">
    <property type="entry name" value="Cytochrome_b_N"/>
    <property type="match status" value="1"/>
</dbReference>
<dbReference type="FunFam" id="1.20.810.10:FF:000002">
    <property type="entry name" value="Cytochrome b"/>
    <property type="match status" value="1"/>
</dbReference>
<dbReference type="Gene3D" id="1.20.810.10">
    <property type="entry name" value="Cytochrome Bc1 Complex, Chain C"/>
    <property type="match status" value="1"/>
</dbReference>
<dbReference type="InterPro" id="IPR005798">
    <property type="entry name" value="Cyt_b/b6_C"/>
</dbReference>
<dbReference type="InterPro" id="IPR036150">
    <property type="entry name" value="Cyt_b/b6_C_sf"/>
</dbReference>
<dbReference type="InterPro" id="IPR005797">
    <property type="entry name" value="Cyt_b/b6_N"/>
</dbReference>
<dbReference type="InterPro" id="IPR027387">
    <property type="entry name" value="Cytb/b6-like_sf"/>
</dbReference>
<dbReference type="InterPro" id="IPR030689">
    <property type="entry name" value="Cytochrome_b"/>
</dbReference>
<dbReference type="InterPro" id="IPR048260">
    <property type="entry name" value="Cytochrome_b_C_euk/bac"/>
</dbReference>
<dbReference type="InterPro" id="IPR048259">
    <property type="entry name" value="Cytochrome_b_N_euk/bac"/>
</dbReference>
<dbReference type="InterPro" id="IPR016174">
    <property type="entry name" value="Di-haem_cyt_TM"/>
</dbReference>
<dbReference type="PANTHER" id="PTHR19271">
    <property type="entry name" value="CYTOCHROME B"/>
    <property type="match status" value="1"/>
</dbReference>
<dbReference type="PANTHER" id="PTHR19271:SF16">
    <property type="entry name" value="CYTOCHROME B"/>
    <property type="match status" value="1"/>
</dbReference>
<dbReference type="Pfam" id="PF00032">
    <property type="entry name" value="Cytochrom_B_C"/>
    <property type="match status" value="1"/>
</dbReference>
<dbReference type="Pfam" id="PF00033">
    <property type="entry name" value="Cytochrome_B"/>
    <property type="match status" value="1"/>
</dbReference>
<dbReference type="PIRSF" id="PIRSF038885">
    <property type="entry name" value="COB"/>
    <property type="match status" value="1"/>
</dbReference>
<dbReference type="SUPFAM" id="SSF81648">
    <property type="entry name" value="a domain/subunit of cytochrome bc1 complex (Ubiquinol-cytochrome c reductase)"/>
    <property type="match status" value="1"/>
</dbReference>
<dbReference type="SUPFAM" id="SSF81342">
    <property type="entry name" value="Transmembrane di-heme cytochromes"/>
    <property type="match status" value="1"/>
</dbReference>
<dbReference type="PROSITE" id="PS51003">
    <property type="entry name" value="CYTB_CTER"/>
    <property type="match status" value="1"/>
</dbReference>
<dbReference type="PROSITE" id="PS51002">
    <property type="entry name" value="CYTB_NTER"/>
    <property type="match status" value="1"/>
</dbReference>
<organism>
    <name type="scientific">Hemitrygon laosensis</name>
    <name type="common">Mekong freshwater stingray</name>
    <name type="synonym">Dasyatis laosensis</name>
    <dbReference type="NCBI Taxonomy" id="3355989"/>
    <lineage>
        <taxon>Eukaryota</taxon>
        <taxon>Metazoa</taxon>
        <taxon>Chordata</taxon>
        <taxon>Craniata</taxon>
        <taxon>Vertebrata</taxon>
        <taxon>Chondrichthyes</taxon>
        <taxon>Elasmobranchii</taxon>
        <taxon>Batoidea</taxon>
        <taxon>Myliobatiformes</taxon>
        <taxon>Dasyatidae</taxon>
        <taxon>Hemitrygon</taxon>
    </lineage>
</organism>
<proteinExistence type="inferred from homology"/>
<sequence length="380" mass="43122">MATNIRKTHPLFKIINNSLIDLPTPANISIWWNFGSLLGMCLIIQILTGLFLAMHYTADISSAFSSVAHICRDVNYGWLIRNIHANGASMFFICVYLHIARGLYYGSYLNKETWNIGVVILLLLMVTAFVGYVLPWGQMSFWGATVITNLLSALPYIGDTLVQWIWGGFSIDNATLTRFFTFHFLFPFVTAALTMIHLLFLHETGSNNPTGLTSNTDKIPFHPYFTYKDLVGFFILLFLLTLLALFTPNLLNDAENFIPANPLLTPPHIKPEWYFLFAYAILRSIPNKLGGVLALVFSILILLLVPILHTSKQRSLTFRPITQILFWLLVTNTIILTWIGGQPVEQPFITIGQIASITYFSFFLILFPIAGWWENKMLNL</sequence>
<keyword id="KW-0249">Electron transport</keyword>
<keyword id="KW-0349">Heme</keyword>
<keyword id="KW-0408">Iron</keyword>
<keyword id="KW-0472">Membrane</keyword>
<keyword id="KW-0479">Metal-binding</keyword>
<keyword id="KW-0496">Mitochondrion</keyword>
<keyword id="KW-0999">Mitochondrion inner membrane</keyword>
<keyword id="KW-0679">Respiratory chain</keyword>
<keyword id="KW-0812">Transmembrane</keyword>
<keyword id="KW-1133">Transmembrane helix</keyword>
<keyword id="KW-0813">Transport</keyword>
<keyword id="KW-0830">Ubiquinone</keyword>